<reference evidence="5" key="1">
    <citation type="journal article" date="2007" name="Nature">
        <title>Evolution of genes and genomes on the Drosophila phylogeny.</title>
        <authorList>
            <consortium name="Drosophila 12 genomes consortium"/>
        </authorList>
    </citation>
    <scope>NUCLEOTIDE SEQUENCE [LARGE SCALE GENOMIC DNA]</scope>
    <source>
        <strain evidence="5">Tai18E2 / Tucson 14021-0261.01</strain>
    </source>
</reference>
<protein>
    <recommendedName>
        <fullName>Protein Turandot A</fullName>
    </recommendedName>
</protein>
<evidence type="ECO:0000250" key="1"/>
<evidence type="ECO:0000250" key="2">
    <source>
        <dbReference type="UniProtKB" id="Q8IN44"/>
    </source>
</evidence>
<evidence type="ECO:0000255" key="3"/>
<evidence type="ECO:0000305" key="4"/>
<evidence type="ECO:0000312" key="5">
    <source>
        <dbReference type="EMBL" id="EDW96194.1"/>
    </source>
</evidence>
<accession>B4PPU4</accession>
<gene>
    <name type="primary">TotA</name>
    <name type="ORF">GE25694</name>
</gene>
<feature type="signal peptide" evidence="3">
    <location>
        <begin position="1"/>
        <end position="21"/>
    </location>
</feature>
<feature type="chain" id="PRO_0000355141" description="Protein Turandot A">
    <location>
        <begin position="22"/>
        <end position="129"/>
    </location>
</feature>
<feature type="glycosylation site" description="N-linked (GlcNAc...) asparagine" evidence="3">
    <location>
        <position position="49"/>
    </location>
</feature>
<proteinExistence type="inferred from homology"/>
<organism>
    <name type="scientific">Drosophila yakuba</name>
    <name type="common">Fruit fly</name>
    <dbReference type="NCBI Taxonomy" id="7245"/>
    <lineage>
        <taxon>Eukaryota</taxon>
        <taxon>Metazoa</taxon>
        <taxon>Ecdysozoa</taxon>
        <taxon>Arthropoda</taxon>
        <taxon>Hexapoda</taxon>
        <taxon>Insecta</taxon>
        <taxon>Pterygota</taxon>
        <taxon>Neoptera</taxon>
        <taxon>Endopterygota</taxon>
        <taxon>Diptera</taxon>
        <taxon>Brachycera</taxon>
        <taxon>Muscomorpha</taxon>
        <taxon>Ephydroidea</taxon>
        <taxon>Drosophilidae</taxon>
        <taxon>Drosophila</taxon>
        <taxon>Sophophora</taxon>
    </lineage>
</organism>
<sequence>MNSLTGFMCCALLLISPLCMGYTDEDREADSRKVAEIIRNSQDDDSKINSTQELLDIYRRLYPSLTLEDRESIDKFVNEHTDAILIDGVPSQGGRKTKYVGKVLSPAAKGFAIGFFEELGSKIAQLFTG</sequence>
<comment type="function">
    <text evidence="2">A humoral factor that plays a role in stress tolerance; gives increased resistance to the lethal effects of bacterial challenge and stress. Regulated by the JAK/STAT pathway and NF-KB-like Relish pathway in the fat body, upd3 in the hemocytes and Mekk1 in response to septic injury and consequent immune response (By similarity).</text>
</comment>
<comment type="subcellular location">
    <subcellularLocation>
        <location evidence="2">Secreted</location>
    </subcellularLocation>
    <text evidence="1">Secreted from the fat body into the hemolymph.</text>
</comment>
<comment type="similarity">
    <text evidence="4">Belongs to the Turandot family.</text>
</comment>
<keyword id="KW-0044">Antibiotic</keyword>
<keyword id="KW-0929">Antimicrobial</keyword>
<keyword id="KW-0325">Glycoprotein</keyword>
<keyword id="KW-0391">Immunity</keyword>
<keyword id="KW-0399">Innate immunity</keyword>
<keyword id="KW-0964">Secreted</keyword>
<keyword id="KW-0732">Signal</keyword>
<name>TOTA_DROYA</name>
<dbReference type="EMBL" id="CM000160">
    <property type="protein sequence ID" value="EDW96194.1"/>
    <property type="molecule type" value="Genomic_DNA"/>
</dbReference>
<dbReference type="SMR" id="B4PPU4"/>
<dbReference type="GlyCosmos" id="B4PPU4">
    <property type="glycosylation" value="1 site, No reported glycans"/>
</dbReference>
<dbReference type="EnsemblMetazoa" id="FBtr0272212">
    <property type="protein sequence ID" value="FBpp0270704"/>
    <property type="gene ID" value="FBgn0242752"/>
</dbReference>
<dbReference type="EnsemblMetazoa" id="XM_002096446.4">
    <property type="protein sequence ID" value="XP_002096482.1"/>
    <property type="gene ID" value="LOC6535863"/>
</dbReference>
<dbReference type="GeneID" id="6535863"/>
<dbReference type="KEGG" id="dya:Dyak_GE25694"/>
<dbReference type="HOGENOM" id="CLU_152780_0_0_1"/>
<dbReference type="OMA" id="CCAYSDA"/>
<dbReference type="OrthoDB" id="7861285at2759"/>
<dbReference type="PhylomeDB" id="B4PPU4"/>
<dbReference type="Proteomes" id="UP000002282">
    <property type="component" value="Chromosome 3R"/>
</dbReference>
<dbReference type="GO" id="GO:0005615">
    <property type="term" value="C:extracellular space"/>
    <property type="evidence" value="ECO:0000250"/>
    <property type="project" value="UniProtKB"/>
</dbReference>
<dbReference type="GO" id="GO:0034605">
    <property type="term" value="P:cellular response to heat"/>
    <property type="evidence" value="ECO:0007669"/>
    <property type="project" value="EnsemblMetazoa"/>
</dbReference>
<dbReference type="GO" id="GO:0071260">
    <property type="term" value="P:cellular response to mechanical stimulus"/>
    <property type="evidence" value="ECO:0007669"/>
    <property type="project" value="EnsemblMetazoa"/>
</dbReference>
<dbReference type="GO" id="GO:0034599">
    <property type="term" value="P:cellular response to oxidative stress"/>
    <property type="evidence" value="ECO:0007669"/>
    <property type="project" value="EnsemblMetazoa"/>
</dbReference>
<dbReference type="GO" id="GO:0034644">
    <property type="term" value="P:cellular response to UV"/>
    <property type="evidence" value="ECO:0007669"/>
    <property type="project" value="EnsemblMetazoa"/>
</dbReference>
<dbReference type="GO" id="GO:0042742">
    <property type="term" value="P:defense response to bacterium"/>
    <property type="evidence" value="ECO:0007669"/>
    <property type="project" value="UniProtKB-KW"/>
</dbReference>
<dbReference type="GO" id="GO:0045087">
    <property type="term" value="P:innate immune response"/>
    <property type="evidence" value="ECO:0007669"/>
    <property type="project" value="UniProtKB-KW"/>
</dbReference>
<dbReference type="GO" id="GO:0009617">
    <property type="term" value="P:response to bacterium"/>
    <property type="evidence" value="ECO:0000250"/>
    <property type="project" value="UniProtKB"/>
</dbReference>
<dbReference type="GO" id="GO:0009409">
    <property type="term" value="P:response to cold"/>
    <property type="evidence" value="ECO:0000250"/>
    <property type="project" value="UniProtKB"/>
</dbReference>
<dbReference type="GO" id="GO:0009408">
    <property type="term" value="P:response to heat"/>
    <property type="evidence" value="ECO:0000250"/>
    <property type="project" value="UniProtKB"/>
</dbReference>
<dbReference type="GO" id="GO:0009612">
    <property type="term" value="P:response to mechanical stimulus"/>
    <property type="evidence" value="ECO:0000250"/>
    <property type="project" value="UniProtKB"/>
</dbReference>
<dbReference type="GO" id="GO:0046689">
    <property type="term" value="P:response to mercury ion"/>
    <property type="evidence" value="ECO:0007669"/>
    <property type="project" value="EnsemblMetazoa"/>
</dbReference>
<dbReference type="GO" id="GO:0051597">
    <property type="term" value="P:response to methylmercury"/>
    <property type="evidence" value="ECO:0007669"/>
    <property type="project" value="EnsemblMetazoa"/>
</dbReference>
<dbReference type="GO" id="GO:0006979">
    <property type="term" value="P:response to oxidative stress"/>
    <property type="evidence" value="ECO:0000250"/>
    <property type="project" value="UniProtKB"/>
</dbReference>
<dbReference type="GO" id="GO:0009411">
    <property type="term" value="P:response to UV"/>
    <property type="evidence" value="ECO:0000250"/>
    <property type="project" value="UniProtKB"/>
</dbReference>
<dbReference type="GO" id="GO:0009414">
    <property type="term" value="P:response to water deprivation"/>
    <property type="evidence" value="ECO:0000250"/>
    <property type="project" value="UniProtKB"/>
</dbReference>
<dbReference type="InterPro" id="IPR010825">
    <property type="entry name" value="Turandot"/>
</dbReference>
<dbReference type="Pfam" id="PF07240">
    <property type="entry name" value="Turandot"/>
    <property type="match status" value="1"/>
</dbReference>